<comment type="function">
    <text evidence="1">Catalyzes the conversion of uracil and 5-phospho-alpha-D-ribose 1-diphosphate (PRPP) to UMP and diphosphate.</text>
</comment>
<comment type="catalytic activity">
    <reaction evidence="1">
        <text>UMP + diphosphate = 5-phospho-alpha-D-ribose 1-diphosphate + uracil</text>
        <dbReference type="Rhea" id="RHEA:13017"/>
        <dbReference type="ChEBI" id="CHEBI:17568"/>
        <dbReference type="ChEBI" id="CHEBI:33019"/>
        <dbReference type="ChEBI" id="CHEBI:57865"/>
        <dbReference type="ChEBI" id="CHEBI:58017"/>
        <dbReference type="EC" id="2.4.2.9"/>
    </reaction>
</comment>
<comment type="cofactor">
    <cofactor evidence="1">
        <name>Mg(2+)</name>
        <dbReference type="ChEBI" id="CHEBI:18420"/>
    </cofactor>
    <text evidence="1">Binds 1 Mg(2+) ion per subunit. The magnesium is bound as Mg-PRPP.</text>
</comment>
<comment type="activity regulation">
    <text evidence="1">Allosterically activated by GTP.</text>
</comment>
<comment type="pathway">
    <text evidence="1">Pyrimidine metabolism; UMP biosynthesis via salvage pathway; UMP from uracil: step 1/1.</text>
</comment>
<comment type="similarity">
    <text evidence="1">Belongs to the UPRTase family.</text>
</comment>
<reference key="1">
    <citation type="journal article" date="2009" name="Proc. Natl. Acad. Sci. U.S.A.">
        <title>Biogeography of the Sulfolobus islandicus pan-genome.</title>
        <authorList>
            <person name="Reno M.L."/>
            <person name="Held N.L."/>
            <person name="Fields C.J."/>
            <person name="Burke P.V."/>
            <person name="Whitaker R.J."/>
        </authorList>
    </citation>
    <scope>NUCLEOTIDE SEQUENCE [LARGE SCALE GENOMIC DNA]</scope>
    <source>
        <strain>M.16.4 / Kamchatka #3</strain>
    </source>
</reference>
<sequence>MPLYVIDKPLTLHILTQLRDKNTDQINFRKNLVRLGRILGYEIANTLDYEIVEVETPLGARTKGIDITDLNNIVIINILRAAVPLVEGLLKAFPKARQGVIGASRVEVDGKEVPKDMDVYIYYKKIPNIRAKVDNVIIADPMIATASTMLKVLEEVVRASPKRIYIVSIISSEYGANKILSKYPFIYLFTVTIDPELNNKGYILPGLGDAGDRAFG</sequence>
<protein>
    <recommendedName>
        <fullName evidence="1">Uracil phosphoribosyltransferase</fullName>
        <ecNumber evidence="1">2.4.2.9</ecNumber>
    </recommendedName>
    <alternativeName>
        <fullName evidence="1">UMP pyrophosphorylase</fullName>
    </alternativeName>
    <alternativeName>
        <fullName evidence="1">UPRTase</fullName>
    </alternativeName>
</protein>
<evidence type="ECO:0000255" key="1">
    <source>
        <dbReference type="HAMAP-Rule" id="MF_01218"/>
    </source>
</evidence>
<accession>C4KIV1</accession>
<feature type="chain" id="PRO_1000213940" description="Uracil phosphoribosyltransferase">
    <location>
        <begin position="1"/>
        <end position="216"/>
    </location>
</feature>
<feature type="binding site" evidence="1">
    <location>
        <begin position="30"/>
        <end position="34"/>
    </location>
    <ligand>
        <name>GTP</name>
        <dbReference type="ChEBI" id="CHEBI:37565"/>
    </ligand>
</feature>
<feature type="binding site" evidence="1">
    <location>
        <position position="80"/>
    </location>
    <ligand>
        <name>5-phospho-alpha-D-ribose 1-diphosphate</name>
        <dbReference type="ChEBI" id="CHEBI:58017"/>
    </ligand>
</feature>
<feature type="binding site" evidence="1">
    <location>
        <position position="105"/>
    </location>
    <ligand>
        <name>5-phospho-alpha-D-ribose 1-diphosphate</name>
        <dbReference type="ChEBI" id="CHEBI:58017"/>
    </ligand>
</feature>
<feature type="binding site" evidence="1">
    <location>
        <begin position="140"/>
        <end position="148"/>
    </location>
    <ligand>
        <name>5-phospho-alpha-D-ribose 1-diphosphate</name>
        <dbReference type="ChEBI" id="CHEBI:58017"/>
    </ligand>
</feature>
<feature type="binding site" evidence="1">
    <location>
        <position position="203"/>
    </location>
    <ligand>
        <name>uracil</name>
        <dbReference type="ChEBI" id="CHEBI:17568"/>
    </ligand>
</feature>
<feature type="binding site" evidence="1">
    <location>
        <begin position="208"/>
        <end position="210"/>
    </location>
    <ligand>
        <name>uracil</name>
        <dbReference type="ChEBI" id="CHEBI:17568"/>
    </ligand>
</feature>
<feature type="binding site" evidence="1">
    <location>
        <position position="209"/>
    </location>
    <ligand>
        <name>5-phospho-alpha-D-ribose 1-diphosphate</name>
        <dbReference type="ChEBI" id="CHEBI:58017"/>
    </ligand>
</feature>
<proteinExistence type="inferred from homology"/>
<dbReference type="EC" id="2.4.2.9" evidence="1"/>
<dbReference type="EMBL" id="CP001402">
    <property type="protein sequence ID" value="ACR42515.1"/>
    <property type="molecule type" value="Genomic_DNA"/>
</dbReference>
<dbReference type="RefSeq" id="WP_012736065.1">
    <property type="nucleotide sequence ID" value="NC_012726.1"/>
</dbReference>
<dbReference type="SMR" id="C4KIV1"/>
<dbReference type="GeneID" id="84062217"/>
<dbReference type="KEGG" id="sid:M164_1912"/>
<dbReference type="HOGENOM" id="CLU_067096_2_0_2"/>
<dbReference type="UniPathway" id="UPA00574">
    <property type="reaction ID" value="UER00636"/>
</dbReference>
<dbReference type="Proteomes" id="UP000001479">
    <property type="component" value="Chromosome"/>
</dbReference>
<dbReference type="GO" id="GO:0005525">
    <property type="term" value="F:GTP binding"/>
    <property type="evidence" value="ECO:0007669"/>
    <property type="project" value="UniProtKB-KW"/>
</dbReference>
<dbReference type="GO" id="GO:0000287">
    <property type="term" value="F:magnesium ion binding"/>
    <property type="evidence" value="ECO:0007669"/>
    <property type="project" value="UniProtKB-UniRule"/>
</dbReference>
<dbReference type="GO" id="GO:0004845">
    <property type="term" value="F:uracil phosphoribosyltransferase activity"/>
    <property type="evidence" value="ECO:0007669"/>
    <property type="project" value="UniProtKB-UniRule"/>
</dbReference>
<dbReference type="GO" id="GO:0044206">
    <property type="term" value="P:UMP salvage"/>
    <property type="evidence" value="ECO:0007669"/>
    <property type="project" value="UniProtKB-UniRule"/>
</dbReference>
<dbReference type="GO" id="GO:0006223">
    <property type="term" value="P:uracil salvage"/>
    <property type="evidence" value="ECO:0007669"/>
    <property type="project" value="InterPro"/>
</dbReference>
<dbReference type="CDD" id="cd06223">
    <property type="entry name" value="PRTases_typeI"/>
    <property type="match status" value="1"/>
</dbReference>
<dbReference type="Gene3D" id="3.40.50.2020">
    <property type="match status" value="1"/>
</dbReference>
<dbReference type="HAMAP" id="MF_01218_A">
    <property type="entry name" value="Upp_A"/>
    <property type="match status" value="1"/>
</dbReference>
<dbReference type="InterPro" id="IPR000836">
    <property type="entry name" value="PRibTrfase_dom"/>
</dbReference>
<dbReference type="InterPro" id="IPR029057">
    <property type="entry name" value="PRTase-like"/>
</dbReference>
<dbReference type="InterPro" id="IPR034331">
    <property type="entry name" value="Upp_A"/>
</dbReference>
<dbReference type="InterPro" id="IPR005765">
    <property type="entry name" value="Ura_phspho_trans"/>
</dbReference>
<dbReference type="NCBIfam" id="NF001097">
    <property type="entry name" value="PRK00129.1"/>
    <property type="match status" value="1"/>
</dbReference>
<dbReference type="NCBIfam" id="TIGR01091">
    <property type="entry name" value="upp"/>
    <property type="match status" value="1"/>
</dbReference>
<dbReference type="Pfam" id="PF14681">
    <property type="entry name" value="UPRTase"/>
    <property type="match status" value="1"/>
</dbReference>
<dbReference type="SUPFAM" id="SSF53271">
    <property type="entry name" value="PRTase-like"/>
    <property type="match status" value="1"/>
</dbReference>
<keyword id="KW-0021">Allosteric enzyme</keyword>
<keyword id="KW-0328">Glycosyltransferase</keyword>
<keyword id="KW-0342">GTP-binding</keyword>
<keyword id="KW-0460">Magnesium</keyword>
<keyword id="KW-0547">Nucleotide-binding</keyword>
<keyword id="KW-0808">Transferase</keyword>
<gene>
    <name evidence="1" type="primary">upp</name>
    <name type="ordered locus">M164_1912</name>
</gene>
<name>UPP_SACI6</name>
<organism>
    <name type="scientific">Saccharolobus islandicus (strain M.16.4 / Kamchatka #3)</name>
    <name type="common">Sulfolobus islandicus</name>
    <dbReference type="NCBI Taxonomy" id="426118"/>
    <lineage>
        <taxon>Archaea</taxon>
        <taxon>Thermoproteota</taxon>
        <taxon>Thermoprotei</taxon>
        <taxon>Sulfolobales</taxon>
        <taxon>Sulfolobaceae</taxon>
        <taxon>Saccharolobus</taxon>
    </lineage>
</organism>